<feature type="chain" id="PRO_0000077087" description="Large ribosomal subunit protein uL3">
    <location>
        <begin position="1"/>
        <end position="221"/>
    </location>
</feature>
<organism>
    <name type="scientific">Chlamydia trachomatis serovar D (strain ATCC VR-885 / DSM 19411 / UW-3/Cx)</name>
    <dbReference type="NCBI Taxonomy" id="272561"/>
    <lineage>
        <taxon>Bacteria</taxon>
        <taxon>Pseudomonadati</taxon>
        <taxon>Chlamydiota</taxon>
        <taxon>Chlamydiia</taxon>
        <taxon>Chlamydiales</taxon>
        <taxon>Chlamydiaceae</taxon>
        <taxon>Chlamydia/Chlamydophila group</taxon>
        <taxon>Chlamydia</taxon>
    </lineage>
</organism>
<keyword id="KW-1185">Reference proteome</keyword>
<keyword id="KW-0687">Ribonucleoprotein</keyword>
<keyword id="KW-0689">Ribosomal protein</keyword>
<keyword id="KW-0694">RNA-binding</keyword>
<keyword id="KW-0699">rRNA-binding</keyword>
<accession>O84533</accession>
<proteinExistence type="inferred from homology"/>
<dbReference type="EMBL" id="AE001273">
    <property type="protein sequence ID" value="AAC68129.1"/>
    <property type="molecule type" value="Genomic_DNA"/>
</dbReference>
<dbReference type="PIR" id="F71507">
    <property type="entry name" value="F71507"/>
</dbReference>
<dbReference type="RefSeq" id="NP_220043.1">
    <property type="nucleotide sequence ID" value="NC_000117.1"/>
</dbReference>
<dbReference type="RefSeq" id="WP_009871892.1">
    <property type="nucleotide sequence ID" value="NC_000117.1"/>
</dbReference>
<dbReference type="SMR" id="O84533"/>
<dbReference type="FunCoup" id="O84533">
    <property type="interactions" value="284"/>
</dbReference>
<dbReference type="STRING" id="272561.CT_528"/>
<dbReference type="EnsemblBacteria" id="AAC68129">
    <property type="protein sequence ID" value="AAC68129"/>
    <property type="gene ID" value="CT_528"/>
</dbReference>
<dbReference type="GeneID" id="884303"/>
<dbReference type="KEGG" id="ctr:CT_528"/>
<dbReference type="PATRIC" id="fig|272561.5.peg.572"/>
<dbReference type="HOGENOM" id="CLU_044142_4_1_0"/>
<dbReference type="InParanoid" id="O84533"/>
<dbReference type="OrthoDB" id="9806135at2"/>
<dbReference type="Proteomes" id="UP000000431">
    <property type="component" value="Chromosome"/>
</dbReference>
<dbReference type="GO" id="GO:0022625">
    <property type="term" value="C:cytosolic large ribosomal subunit"/>
    <property type="evidence" value="ECO:0000318"/>
    <property type="project" value="GO_Central"/>
</dbReference>
<dbReference type="GO" id="GO:0019843">
    <property type="term" value="F:rRNA binding"/>
    <property type="evidence" value="ECO:0007669"/>
    <property type="project" value="UniProtKB-UniRule"/>
</dbReference>
<dbReference type="GO" id="GO:0003735">
    <property type="term" value="F:structural constituent of ribosome"/>
    <property type="evidence" value="ECO:0000318"/>
    <property type="project" value="GO_Central"/>
</dbReference>
<dbReference type="GO" id="GO:0006412">
    <property type="term" value="P:translation"/>
    <property type="evidence" value="ECO:0007669"/>
    <property type="project" value="UniProtKB-UniRule"/>
</dbReference>
<dbReference type="FunFam" id="2.40.30.10:FF:000004">
    <property type="entry name" value="50S ribosomal protein L3"/>
    <property type="match status" value="1"/>
</dbReference>
<dbReference type="Gene3D" id="3.30.160.810">
    <property type="match status" value="1"/>
</dbReference>
<dbReference type="Gene3D" id="2.40.30.10">
    <property type="entry name" value="Translation factors"/>
    <property type="match status" value="1"/>
</dbReference>
<dbReference type="HAMAP" id="MF_01325_B">
    <property type="entry name" value="Ribosomal_uL3_B"/>
    <property type="match status" value="1"/>
</dbReference>
<dbReference type="InterPro" id="IPR000597">
    <property type="entry name" value="Ribosomal_uL3"/>
</dbReference>
<dbReference type="InterPro" id="IPR019927">
    <property type="entry name" value="Ribosomal_uL3_bac/org-type"/>
</dbReference>
<dbReference type="InterPro" id="IPR009000">
    <property type="entry name" value="Transl_B-barrel_sf"/>
</dbReference>
<dbReference type="NCBIfam" id="TIGR03625">
    <property type="entry name" value="L3_bact"/>
    <property type="match status" value="1"/>
</dbReference>
<dbReference type="PANTHER" id="PTHR11229">
    <property type="entry name" value="50S RIBOSOMAL PROTEIN L3"/>
    <property type="match status" value="1"/>
</dbReference>
<dbReference type="PANTHER" id="PTHR11229:SF16">
    <property type="entry name" value="LARGE RIBOSOMAL SUBUNIT PROTEIN UL3C"/>
    <property type="match status" value="1"/>
</dbReference>
<dbReference type="Pfam" id="PF00297">
    <property type="entry name" value="Ribosomal_L3"/>
    <property type="match status" value="1"/>
</dbReference>
<dbReference type="SUPFAM" id="SSF50447">
    <property type="entry name" value="Translation proteins"/>
    <property type="match status" value="1"/>
</dbReference>
<gene>
    <name evidence="1" type="primary">rplC</name>
    <name type="synonym">rl3</name>
    <name type="ordered locus">CT_528</name>
</gene>
<reference key="1">
    <citation type="journal article" date="1998" name="Science">
        <title>Genome sequence of an obligate intracellular pathogen of humans: Chlamydia trachomatis.</title>
        <authorList>
            <person name="Stephens R.S."/>
            <person name="Kalman S."/>
            <person name="Lammel C.J."/>
            <person name="Fan J."/>
            <person name="Marathe R."/>
            <person name="Aravind L."/>
            <person name="Mitchell W.P."/>
            <person name="Olinger L."/>
            <person name="Tatusov R.L."/>
            <person name="Zhao Q."/>
            <person name="Koonin E.V."/>
            <person name="Davis R.W."/>
        </authorList>
    </citation>
    <scope>NUCLEOTIDE SEQUENCE [LARGE SCALE GENOMIC DNA]</scope>
    <source>
        <strain>ATCC VR-885 / DSM 19411 / UW-3/Cx</strain>
    </source>
</reference>
<comment type="function">
    <text evidence="1">One of the primary rRNA binding proteins, it binds directly near the 3'-end of the 23S rRNA, where it nucleates assembly of the 50S subunit.</text>
</comment>
<comment type="subunit">
    <text evidence="1">Part of the 50S ribosomal subunit. Forms a cluster with proteins L14 and L19.</text>
</comment>
<comment type="similarity">
    <text evidence="1">Belongs to the universal ribosomal protein uL3 family.</text>
</comment>
<name>RL3_CHLTR</name>
<evidence type="ECO:0000255" key="1">
    <source>
        <dbReference type="HAMAP-Rule" id="MF_01325"/>
    </source>
</evidence>
<evidence type="ECO:0000305" key="2"/>
<protein>
    <recommendedName>
        <fullName evidence="1">Large ribosomal subunit protein uL3</fullName>
    </recommendedName>
    <alternativeName>
        <fullName evidence="2">50S ribosomal protein L3</fullName>
    </alternativeName>
</protein>
<sequence>MRSQLSLIGKKEGMMHVFDKNGNLVACSVISVDANVVAQLKTASSDGYNAVQMGADVVQAPEKTIEKRFSKALLGHFKKSGGRVCRVLKEVVVSEEAVQSVSLGDEFGLEIFDGVSNVDICGISKGKGFQGVMKKFGFRGGPKSHGSGFHRHAGSTGMRSTPGRCFPGSKRPSHMGCDRVTVKNLEVVKVDLDRKVMLVKGAIPGFKGSVVVVKRSCGVEG</sequence>